<name>RL21_SHIB3</name>
<gene>
    <name evidence="1" type="primary">rplU</name>
    <name type="ordered locus">SbBS512_E3584</name>
</gene>
<organism>
    <name type="scientific">Shigella boydii serotype 18 (strain CDC 3083-94 / BS512)</name>
    <dbReference type="NCBI Taxonomy" id="344609"/>
    <lineage>
        <taxon>Bacteria</taxon>
        <taxon>Pseudomonadati</taxon>
        <taxon>Pseudomonadota</taxon>
        <taxon>Gammaproteobacteria</taxon>
        <taxon>Enterobacterales</taxon>
        <taxon>Enterobacteriaceae</taxon>
        <taxon>Shigella</taxon>
    </lineage>
</organism>
<protein>
    <recommendedName>
        <fullName evidence="1">Large ribosomal subunit protein bL21</fullName>
    </recommendedName>
    <alternativeName>
        <fullName evidence="2">50S ribosomal protein L21</fullName>
    </alternativeName>
</protein>
<sequence length="103" mass="11564">MYAVFQSGGKQHRVSEGQTVRLEKLDIATGETVEFAEVLMIANGEEVKIGVPFVDGGVIKAEVVAHGRGEKVKIVKFRRRKHYRKQQGHRQWFTDVKITGISA</sequence>
<feature type="chain" id="PRO_1000143852" description="Large ribosomal subunit protein bL21">
    <location>
        <begin position="1"/>
        <end position="103"/>
    </location>
</feature>
<dbReference type="EMBL" id="CP001063">
    <property type="protein sequence ID" value="ACD09201.1"/>
    <property type="molecule type" value="Genomic_DNA"/>
</dbReference>
<dbReference type="RefSeq" id="WP_000271401.1">
    <property type="nucleotide sequence ID" value="NC_010658.1"/>
</dbReference>
<dbReference type="SMR" id="B2U1Z1"/>
<dbReference type="STRING" id="344609.SbBS512_E3584"/>
<dbReference type="GeneID" id="93778795"/>
<dbReference type="KEGG" id="sbc:SbBS512_E3584"/>
<dbReference type="HOGENOM" id="CLU_061463_3_3_6"/>
<dbReference type="Proteomes" id="UP000001030">
    <property type="component" value="Chromosome"/>
</dbReference>
<dbReference type="GO" id="GO:0005737">
    <property type="term" value="C:cytoplasm"/>
    <property type="evidence" value="ECO:0007669"/>
    <property type="project" value="UniProtKB-ARBA"/>
</dbReference>
<dbReference type="GO" id="GO:1990904">
    <property type="term" value="C:ribonucleoprotein complex"/>
    <property type="evidence" value="ECO:0007669"/>
    <property type="project" value="UniProtKB-KW"/>
</dbReference>
<dbReference type="GO" id="GO:0005840">
    <property type="term" value="C:ribosome"/>
    <property type="evidence" value="ECO:0007669"/>
    <property type="project" value="UniProtKB-KW"/>
</dbReference>
<dbReference type="GO" id="GO:0019843">
    <property type="term" value="F:rRNA binding"/>
    <property type="evidence" value="ECO:0007669"/>
    <property type="project" value="UniProtKB-UniRule"/>
</dbReference>
<dbReference type="GO" id="GO:0003735">
    <property type="term" value="F:structural constituent of ribosome"/>
    <property type="evidence" value="ECO:0007669"/>
    <property type="project" value="InterPro"/>
</dbReference>
<dbReference type="GO" id="GO:0006412">
    <property type="term" value="P:translation"/>
    <property type="evidence" value="ECO:0007669"/>
    <property type="project" value="UniProtKB-UniRule"/>
</dbReference>
<dbReference type="HAMAP" id="MF_01363">
    <property type="entry name" value="Ribosomal_bL21"/>
    <property type="match status" value="1"/>
</dbReference>
<dbReference type="InterPro" id="IPR028909">
    <property type="entry name" value="bL21-like"/>
</dbReference>
<dbReference type="InterPro" id="IPR036164">
    <property type="entry name" value="bL21-like_sf"/>
</dbReference>
<dbReference type="InterPro" id="IPR001787">
    <property type="entry name" value="Ribosomal_bL21"/>
</dbReference>
<dbReference type="InterPro" id="IPR018258">
    <property type="entry name" value="Ribosomal_bL21_CS"/>
</dbReference>
<dbReference type="NCBIfam" id="TIGR00061">
    <property type="entry name" value="L21"/>
    <property type="match status" value="1"/>
</dbReference>
<dbReference type="PANTHER" id="PTHR21349">
    <property type="entry name" value="50S RIBOSOMAL PROTEIN L21"/>
    <property type="match status" value="1"/>
</dbReference>
<dbReference type="PANTHER" id="PTHR21349:SF0">
    <property type="entry name" value="LARGE RIBOSOMAL SUBUNIT PROTEIN BL21M"/>
    <property type="match status" value="1"/>
</dbReference>
<dbReference type="Pfam" id="PF00829">
    <property type="entry name" value="Ribosomal_L21p"/>
    <property type="match status" value="1"/>
</dbReference>
<dbReference type="SUPFAM" id="SSF141091">
    <property type="entry name" value="L21p-like"/>
    <property type="match status" value="1"/>
</dbReference>
<dbReference type="PROSITE" id="PS01169">
    <property type="entry name" value="RIBOSOMAL_L21"/>
    <property type="match status" value="1"/>
</dbReference>
<proteinExistence type="inferred from homology"/>
<comment type="function">
    <text evidence="1">This protein binds to 23S rRNA in the presence of protein L20.</text>
</comment>
<comment type="subunit">
    <text evidence="1">Part of the 50S ribosomal subunit. Contacts protein L20.</text>
</comment>
<comment type="similarity">
    <text evidence="1">Belongs to the bacterial ribosomal protein bL21 family.</text>
</comment>
<evidence type="ECO:0000255" key="1">
    <source>
        <dbReference type="HAMAP-Rule" id="MF_01363"/>
    </source>
</evidence>
<evidence type="ECO:0000305" key="2"/>
<reference key="1">
    <citation type="submission" date="2008-05" db="EMBL/GenBank/DDBJ databases">
        <title>Complete sequence of Shigella boydii serotype 18 strain BS512.</title>
        <authorList>
            <person name="Rasko D.A."/>
            <person name="Rosovitz M."/>
            <person name="Maurelli A.T."/>
            <person name="Myers G."/>
            <person name="Seshadri R."/>
            <person name="Cer R."/>
            <person name="Jiang L."/>
            <person name="Ravel J."/>
            <person name="Sebastian Y."/>
        </authorList>
    </citation>
    <scope>NUCLEOTIDE SEQUENCE [LARGE SCALE GENOMIC DNA]</scope>
    <source>
        <strain>CDC 3083-94 / BS512</strain>
    </source>
</reference>
<accession>B2U1Z1</accession>
<keyword id="KW-1185">Reference proteome</keyword>
<keyword id="KW-0687">Ribonucleoprotein</keyword>
<keyword id="KW-0689">Ribosomal protein</keyword>
<keyword id="KW-0694">RNA-binding</keyword>
<keyword id="KW-0699">rRNA-binding</keyword>